<dbReference type="EMBL" id="AK005726">
    <property type="protein sequence ID" value="BAB24207.1"/>
    <property type="molecule type" value="mRNA"/>
</dbReference>
<dbReference type="EMBL" id="AK015869">
    <property type="protein sequence ID" value="BAB30009.1"/>
    <property type="molecule type" value="mRNA"/>
</dbReference>
<dbReference type="EMBL" id="AK019777">
    <property type="protein sequence ID" value="BAB31850.1"/>
    <property type="molecule type" value="mRNA"/>
</dbReference>
<dbReference type="EMBL" id="BC125547">
    <property type="protein sequence ID" value="AAI25548.1"/>
    <property type="molecule type" value="mRNA"/>
</dbReference>
<dbReference type="EMBL" id="BC125549">
    <property type="protein sequence ID" value="AAI25550.1"/>
    <property type="molecule type" value="mRNA"/>
</dbReference>
<dbReference type="CCDS" id="CCDS18465.1">
    <molecule id="Q9CPZ3-1"/>
</dbReference>
<dbReference type="CCDS" id="CCDS57290.1">
    <molecule id="Q9CPZ3-2"/>
</dbReference>
<dbReference type="RefSeq" id="NP_001186019.1">
    <molecule id="Q9CPZ3-2"/>
    <property type="nucleotide sequence ID" value="NM_001199090.1"/>
</dbReference>
<dbReference type="RefSeq" id="NP_080567.1">
    <molecule id="Q9CPZ3-1"/>
    <property type="nucleotide sequence ID" value="NM_026291.3"/>
</dbReference>
<dbReference type="SMR" id="Q9CPZ3"/>
<dbReference type="STRING" id="10090.ENSMUSP00000099786"/>
<dbReference type="GlyGen" id="Q9CPZ3">
    <property type="glycosylation" value="1 site"/>
</dbReference>
<dbReference type="PaxDb" id="10090-ENSMUSP00000099786"/>
<dbReference type="Antibodypedia" id="66801">
    <property type="antibodies" value="31 antibodies from 3 providers"/>
</dbReference>
<dbReference type="Ensembl" id="ENSMUST00000082306.8">
    <molecule id="Q9CPZ3-2"/>
    <property type="protein sequence ID" value="ENSMUSP00000080923.8"/>
    <property type="gene ID" value="ENSMUSG00000060491.15"/>
</dbReference>
<dbReference type="Ensembl" id="ENSMUST00000102725.11">
    <molecule id="Q9CPZ3-1"/>
    <property type="protein sequence ID" value="ENSMUSP00000099786.5"/>
    <property type="gene ID" value="ENSMUSG00000060491.15"/>
</dbReference>
<dbReference type="GeneID" id="67646"/>
<dbReference type="KEGG" id="mmu:67646"/>
<dbReference type="UCSC" id="uc008uco.2">
    <molecule id="Q9CPZ3-2"/>
    <property type="organism name" value="mouse"/>
</dbReference>
<dbReference type="UCSC" id="uc008ucp.2">
    <molecule id="Q9CPZ3-1"/>
    <property type="organism name" value="mouse"/>
</dbReference>
<dbReference type="AGR" id="MGI:1914896"/>
<dbReference type="MGI" id="MGI:1914896">
    <property type="gene designation" value="4930522H14Rik"/>
</dbReference>
<dbReference type="VEuPathDB" id="HostDB:ENSMUSG00000060491"/>
<dbReference type="eggNOG" id="ENOG502T2P4">
    <property type="taxonomic scope" value="Eukaryota"/>
</dbReference>
<dbReference type="GeneTree" id="ENSGT00390000000797"/>
<dbReference type="HOGENOM" id="CLU_1431188_0_0_1"/>
<dbReference type="InParanoid" id="Q9CPZ3"/>
<dbReference type="OMA" id="TKSHSQC"/>
<dbReference type="OrthoDB" id="9423720at2759"/>
<dbReference type="PhylomeDB" id="Q9CPZ3"/>
<dbReference type="TreeFam" id="TF338951"/>
<dbReference type="BioGRID-ORCS" id="67646">
    <property type="hits" value="0 hits in 77 CRISPR screens"/>
</dbReference>
<dbReference type="PRO" id="PR:Q9CPZ3"/>
<dbReference type="Proteomes" id="UP000000589">
    <property type="component" value="Chromosome 4"/>
</dbReference>
<dbReference type="RNAct" id="Q9CPZ3">
    <property type="molecule type" value="protein"/>
</dbReference>
<dbReference type="Bgee" id="ENSMUSG00000060491">
    <property type="expression patterns" value="Expressed in spermatid and 16 other cell types or tissues"/>
</dbReference>
<dbReference type="GO" id="GO:0016020">
    <property type="term" value="C:membrane"/>
    <property type="evidence" value="ECO:0007669"/>
    <property type="project" value="UniProtKB-SubCell"/>
</dbReference>
<dbReference type="InterPro" id="IPR031695">
    <property type="entry name" value="DUF4718"/>
</dbReference>
<dbReference type="PANTHER" id="PTHR37858:SF1">
    <property type="entry name" value="CHROMOSOME 1 OPEN READING FRAME 185"/>
    <property type="match status" value="1"/>
</dbReference>
<dbReference type="PANTHER" id="PTHR37858">
    <property type="entry name" value="HYPOTHETICAL PROTEIN LOC689589"/>
    <property type="match status" value="1"/>
</dbReference>
<dbReference type="Pfam" id="PF15842">
    <property type="entry name" value="DUF4718"/>
    <property type="match status" value="1"/>
</dbReference>
<proteinExistence type="evidence at transcript level"/>
<reference key="1">
    <citation type="journal article" date="2005" name="Science">
        <title>The transcriptional landscape of the mammalian genome.</title>
        <authorList>
            <person name="Carninci P."/>
            <person name="Kasukawa T."/>
            <person name="Katayama S."/>
            <person name="Gough J."/>
            <person name="Frith M.C."/>
            <person name="Maeda N."/>
            <person name="Oyama R."/>
            <person name="Ravasi T."/>
            <person name="Lenhard B."/>
            <person name="Wells C."/>
            <person name="Kodzius R."/>
            <person name="Shimokawa K."/>
            <person name="Bajic V.B."/>
            <person name="Brenner S.E."/>
            <person name="Batalov S."/>
            <person name="Forrest A.R."/>
            <person name="Zavolan M."/>
            <person name="Davis M.J."/>
            <person name="Wilming L.G."/>
            <person name="Aidinis V."/>
            <person name="Allen J.E."/>
            <person name="Ambesi-Impiombato A."/>
            <person name="Apweiler R."/>
            <person name="Aturaliya R.N."/>
            <person name="Bailey T.L."/>
            <person name="Bansal M."/>
            <person name="Baxter L."/>
            <person name="Beisel K.W."/>
            <person name="Bersano T."/>
            <person name="Bono H."/>
            <person name="Chalk A.M."/>
            <person name="Chiu K.P."/>
            <person name="Choudhary V."/>
            <person name="Christoffels A."/>
            <person name="Clutterbuck D.R."/>
            <person name="Crowe M.L."/>
            <person name="Dalla E."/>
            <person name="Dalrymple B.P."/>
            <person name="de Bono B."/>
            <person name="Della Gatta G."/>
            <person name="di Bernardo D."/>
            <person name="Down T."/>
            <person name="Engstrom P."/>
            <person name="Fagiolini M."/>
            <person name="Faulkner G."/>
            <person name="Fletcher C.F."/>
            <person name="Fukushima T."/>
            <person name="Furuno M."/>
            <person name="Futaki S."/>
            <person name="Gariboldi M."/>
            <person name="Georgii-Hemming P."/>
            <person name="Gingeras T.R."/>
            <person name="Gojobori T."/>
            <person name="Green R.E."/>
            <person name="Gustincich S."/>
            <person name="Harbers M."/>
            <person name="Hayashi Y."/>
            <person name="Hensch T.K."/>
            <person name="Hirokawa N."/>
            <person name="Hill D."/>
            <person name="Huminiecki L."/>
            <person name="Iacono M."/>
            <person name="Ikeo K."/>
            <person name="Iwama A."/>
            <person name="Ishikawa T."/>
            <person name="Jakt M."/>
            <person name="Kanapin A."/>
            <person name="Katoh M."/>
            <person name="Kawasawa Y."/>
            <person name="Kelso J."/>
            <person name="Kitamura H."/>
            <person name="Kitano H."/>
            <person name="Kollias G."/>
            <person name="Krishnan S.P."/>
            <person name="Kruger A."/>
            <person name="Kummerfeld S.K."/>
            <person name="Kurochkin I.V."/>
            <person name="Lareau L.F."/>
            <person name="Lazarevic D."/>
            <person name="Lipovich L."/>
            <person name="Liu J."/>
            <person name="Liuni S."/>
            <person name="McWilliam S."/>
            <person name="Madan Babu M."/>
            <person name="Madera M."/>
            <person name="Marchionni L."/>
            <person name="Matsuda H."/>
            <person name="Matsuzawa S."/>
            <person name="Miki H."/>
            <person name="Mignone F."/>
            <person name="Miyake S."/>
            <person name="Morris K."/>
            <person name="Mottagui-Tabar S."/>
            <person name="Mulder N."/>
            <person name="Nakano N."/>
            <person name="Nakauchi H."/>
            <person name="Ng P."/>
            <person name="Nilsson R."/>
            <person name="Nishiguchi S."/>
            <person name="Nishikawa S."/>
            <person name="Nori F."/>
            <person name="Ohara O."/>
            <person name="Okazaki Y."/>
            <person name="Orlando V."/>
            <person name="Pang K.C."/>
            <person name="Pavan W.J."/>
            <person name="Pavesi G."/>
            <person name="Pesole G."/>
            <person name="Petrovsky N."/>
            <person name="Piazza S."/>
            <person name="Reed J."/>
            <person name="Reid J.F."/>
            <person name="Ring B.Z."/>
            <person name="Ringwald M."/>
            <person name="Rost B."/>
            <person name="Ruan Y."/>
            <person name="Salzberg S.L."/>
            <person name="Sandelin A."/>
            <person name="Schneider C."/>
            <person name="Schoenbach C."/>
            <person name="Sekiguchi K."/>
            <person name="Semple C.A."/>
            <person name="Seno S."/>
            <person name="Sessa L."/>
            <person name="Sheng Y."/>
            <person name="Shibata Y."/>
            <person name="Shimada H."/>
            <person name="Shimada K."/>
            <person name="Silva D."/>
            <person name="Sinclair B."/>
            <person name="Sperling S."/>
            <person name="Stupka E."/>
            <person name="Sugiura K."/>
            <person name="Sultana R."/>
            <person name="Takenaka Y."/>
            <person name="Taki K."/>
            <person name="Tammoja K."/>
            <person name="Tan S.L."/>
            <person name="Tang S."/>
            <person name="Taylor M.S."/>
            <person name="Tegner J."/>
            <person name="Teichmann S.A."/>
            <person name="Ueda H.R."/>
            <person name="van Nimwegen E."/>
            <person name="Verardo R."/>
            <person name="Wei C.L."/>
            <person name="Yagi K."/>
            <person name="Yamanishi H."/>
            <person name="Zabarovsky E."/>
            <person name="Zhu S."/>
            <person name="Zimmer A."/>
            <person name="Hide W."/>
            <person name="Bult C."/>
            <person name="Grimmond S.M."/>
            <person name="Teasdale R.D."/>
            <person name="Liu E.T."/>
            <person name="Brusic V."/>
            <person name="Quackenbush J."/>
            <person name="Wahlestedt C."/>
            <person name="Mattick J.S."/>
            <person name="Hume D.A."/>
            <person name="Kai C."/>
            <person name="Sasaki D."/>
            <person name="Tomaru Y."/>
            <person name="Fukuda S."/>
            <person name="Kanamori-Katayama M."/>
            <person name="Suzuki M."/>
            <person name="Aoki J."/>
            <person name="Arakawa T."/>
            <person name="Iida J."/>
            <person name="Imamura K."/>
            <person name="Itoh M."/>
            <person name="Kato T."/>
            <person name="Kawaji H."/>
            <person name="Kawagashira N."/>
            <person name="Kawashima T."/>
            <person name="Kojima M."/>
            <person name="Kondo S."/>
            <person name="Konno H."/>
            <person name="Nakano K."/>
            <person name="Ninomiya N."/>
            <person name="Nishio T."/>
            <person name="Okada M."/>
            <person name="Plessy C."/>
            <person name="Shibata K."/>
            <person name="Shiraki T."/>
            <person name="Suzuki S."/>
            <person name="Tagami M."/>
            <person name="Waki K."/>
            <person name="Watahiki A."/>
            <person name="Okamura-Oho Y."/>
            <person name="Suzuki H."/>
            <person name="Kawai J."/>
            <person name="Hayashizaki Y."/>
        </authorList>
    </citation>
    <scope>NUCLEOTIDE SEQUENCE [LARGE SCALE MRNA] (ISOFORMS 1 AND 2)</scope>
    <source>
        <strain>C57BL/6J</strain>
        <tissue>Testis</tissue>
    </source>
</reference>
<reference key="2">
    <citation type="journal article" date="2004" name="Genome Res.">
        <title>The status, quality, and expansion of the NIH full-length cDNA project: the Mammalian Gene Collection (MGC).</title>
        <authorList>
            <consortium name="The MGC Project Team"/>
        </authorList>
    </citation>
    <scope>NUCLEOTIDE SEQUENCE [LARGE SCALE MRNA] (ISOFORM 1)</scope>
    <source>
        <tissue>Brain</tissue>
    </source>
</reference>
<keyword id="KW-0025">Alternative splicing</keyword>
<keyword id="KW-0325">Glycoprotein</keyword>
<keyword id="KW-0472">Membrane</keyword>
<keyword id="KW-1185">Reference proteome</keyword>
<keyword id="KW-0812">Transmembrane</keyword>
<keyword id="KW-1133">Transmembrane helix</keyword>
<feature type="chain" id="PRO_0000271102" description="Uncharacterized protein C1orf185 homolog">
    <location>
        <begin position="1"/>
        <end position="230"/>
    </location>
</feature>
<feature type="transmembrane region" description="Helical" evidence="1">
    <location>
        <begin position="17"/>
        <end position="37"/>
    </location>
</feature>
<feature type="glycosylation site" description="N-linked (GlcNAc...) asparagine" evidence="1">
    <location>
        <position position="126"/>
    </location>
</feature>
<feature type="splice variant" id="VSP_022279" description="In isoform 2." evidence="2">
    <original>MTSPN</original>
    <variation>M</variation>
    <location>
        <begin position="1"/>
        <end position="5"/>
    </location>
</feature>
<evidence type="ECO:0000255" key="1"/>
<evidence type="ECO:0000303" key="2">
    <source>
    </source>
</evidence>
<evidence type="ECO:0000305" key="3"/>
<accession>Q9CPZ3</accession>
<accession>Q9DAM0</accession>
<protein>
    <recommendedName>
        <fullName>Uncharacterized protein C1orf185 homolog</fullName>
    </recommendedName>
</protein>
<sequence length="230" mass="25707">MTSPNGVFSHLTYFMAAGALSLGIGFFALASALWFLICKRRELFEESKFKEFGENMKQGSCKPKLKAHPQCVFISRNFHAGYLQSQTEKREKEEAEKKAVRSHSKVEFCLQDPISCESPEVTSVANGSSVSTLSLSTSISSSYCCQTVEEAEDWLTDDCLETRIPLKNPLLGEPLKKKVLAYLSSISLEEWPGNTVSNTFCSEQKTDSLKELLVLKNTEVGKHNLQFDIE</sequence>
<comment type="subcellular location">
    <subcellularLocation>
        <location evidence="3">Membrane</location>
        <topology evidence="3">Single-pass membrane protein</topology>
    </subcellularLocation>
</comment>
<comment type="alternative products">
    <event type="alternative splicing"/>
    <isoform>
        <id>Q9CPZ3-1</id>
        <name>1</name>
        <sequence type="displayed"/>
    </isoform>
    <isoform>
        <id>Q9CPZ3-2</id>
        <name>2</name>
        <sequence type="described" ref="VSP_022279"/>
    </isoform>
</comment>
<name>CA185_MOUSE</name>
<organism>
    <name type="scientific">Mus musculus</name>
    <name type="common">Mouse</name>
    <dbReference type="NCBI Taxonomy" id="10090"/>
    <lineage>
        <taxon>Eukaryota</taxon>
        <taxon>Metazoa</taxon>
        <taxon>Chordata</taxon>
        <taxon>Craniata</taxon>
        <taxon>Vertebrata</taxon>
        <taxon>Euteleostomi</taxon>
        <taxon>Mammalia</taxon>
        <taxon>Eutheria</taxon>
        <taxon>Euarchontoglires</taxon>
        <taxon>Glires</taxon>
        <taxon>Rodentia</taxon>
        <taxon>Myomorpha</taxon>
        <taxon>Muroidea</taxon>
        <taxon>Muridae</taxon>
        <taxon>Murinae</taxon>
        <taxon>Mus</taxon>
        <taxon>Mus</taxon>
    </lineage>
</organism>